<organism>
    <name type="scientific">Saccharomyces cerevisiae (strain ATCC 204508 / S288c)</name>
    <name type="common">Baker's yeast</name>
    <dbReference type="NCBI Taxonomy" id="559292"/>
    <lineage>
        <taxon>Eukaryota</taxon>
        <taxon>Fungi</taxon>
        <taxon>Dikarya</taxon>
        <taxon>Ascomycota</taxon>
        <taxon>Saccharomycotina</taxon>
        <taxon>Saccharomycetes</taxon>
        <taxon>Saccharomycetales</taxon>
        <taxon>Saccharomycetaceae</taxon>
        <taxon>Saccharomyces</taxon>
    </lineage>
</organism>
<feature type="chain" id="PRO_0000127434" description="Retrograde regulation protein 3">
    <location>
        <begin position="1"/>
        <end position="486"/>
    </location>
</feature>
<feature type="domain" description="bHLH" evidence="1">
    <location>
        <begin position="285"/>
        <end position="344"/>
    </location>
</feature>
<feature type="region of interest" description="Disordered" evidence="2">
    <location>
        <begin position="75"/>
        <end position="130"/>
    </location>
</feature>
<feature type="region of interest" description="Disordered" evidence="2">
    <location>
        <begin position="243"/>
        <end position="274"/>
    </location>
</feature>
<feature type="region of interest" description="Disordered" evidence="2">
    <location>
        <begin position="374"/>
        <end position="395"/>
    </location>
</feature>
<feature type="short sequence motif" description="9aaTAD 1">
    <location>
        <begin position="27"/>
        <end position="35"/>
    </location>
</feature>
<feature type="short sequence motif" description="9aaTAD 2">
    <location>
        <begin position="189"/>
        <end position="197"/>
    </location>
</feature>
<feature type="compositionally biased region" description="Polar residues" evidence="2">
    <location>
        <begin position="75"/>
        <end position="94"/>
    </location>
</feature>
<feature type="compositionally biased region" description="Polar residues" evidence="2">
    <location>
        <begin position="101"/>
        <end position="130"/>
    </location>
</feature>
<feature type="compositionally biased region" description="Polar residues" evidence="2">
    <location>
        <begin position="246"/>
        <end position="263"/>
    </location>
</feature>
<feature type="modified residue" description="Phosphoserine" evidence="8">
    <location>
        <position position="81"/>
    </location>
</feature>
<feature type="modified residue" description="Phosphoserine" evidence="6 8">
    <location>
        <position position="123"/>
    </location>
</feature>
<feature type="modified residue" description="Phosphoserine" evidence="6 7 8">
    <location>
        <position position="142"/>
    </location>
</feature>
<feature type="modified residue" description="Phosphothreonine" evidence="7">
    <location>
        <position position="150"/>
    </location>
</feature>
<feature type="modified residue" description="Phosphoserine" evidence="7">
    <location>
        <position position="227"/>
    </location>
</feature>
<feature type="modified residue" description="Phosphoserine" evidence="7 8">
    <location>
        <position position="236"/>
    </location>
</feature>
<feature type="modified residue" description="Phosphoserine" evidence="8">
    <location>
        <position position="241"/>
    </location>
</feature>
<feature type="modified residue" description="Phosphoserine" evidence="8">
    <location>
        <position position="269"/>
    </location>
</feature>
<proteinExistence type="evidence at protein level"/>
<sequence length="486" mass="54140">MMNNNESEAENQRLLDELMNQTKVLQETLDFSLVTPTPHHNDDYKIHGSAYPGGETPAQQHEKLSYINTHNSNDNNNLMGSQARSNSQTPTASTIYEEAESQSSYLDDMFRTSQGGRPVTQNSISSIGQGPLRSSYSMAYDSPVDRAMNTPLQQQEGLKAELPHDFLFQHGTDDTMYNLTDDLSSSLSSSINSDMMTPNTYSSSFSYNPQSLGPASVSSTYSPKVRSPSSSFRAGSFLSSSFRHGSINTPRTRHTSISSNMTENIGPGSVPKILGGLTSDEKLRRKREFHNAVERRRRELIKQKIKELGQLVPPSLLNYDDLGKQIKPNKGIILDRTVEYLQYLAEILEIQARKKKALLAKIKELEEKKSSVAALSPFTNNHHASSGQNNSENSEERIIDIRSVPNALMNEQNSKAELHNWEPPLYDSVGNHNHAGTMESHPHTNIHEELKEFLSGDLIEAEDNAKLMFGDDNSNPADYLLEFGSG</sequence>
<reference key="1">
    <citation type="journal article" date="1997" name="Mol. Cell. Biol.">
        <title>A basic helix-loop-helix-leucine zipper transcription complex in yeast functions in a signaling pathway from mitochondria to the nucleus.</title>
        <authorList>
            <person name="Jia Y."/>
            <person name="Rothermel B."/>
            <person name="Thornton J."/>
            <person name="Butow R.A."/>
        </authorList>
    </citation>
    <scope>NUCLEOTIDE SEQUENCE [GENOMIC DNA]</scope>
    <source>
        <strain>S288c / GRF88</strain>
    </source>
</reference>
<reference key="2">
    <citation type="journal article" date="1995" name="Yeast">
        <title>Sequence analysis of a 78.6 kb segment of the left end of Saccharomyces cerevisiae chromosome II.</title>
        <authorList>
            <person name="Obermaier B."/>
            <person name="Gassenhuber J."/>
            <person name="Piravandi E."/>
            <person name="Domdey H."/>
        </authorList>
    </citation>
    <scope>NUCLEOTIDE SEQUENCE [GENOMIC DNA]</scope>
    <source>
        <strain>ATCC 204508 / S288c</strain>
    </source>
</reference>
<reference key="3">
    <citation type="journal article" date="1994" name="EMBO J.">
        <title>Complete DNA sequence of yeast chromosome II.</title>
        <authorList>
            <person name="Feldmann H."/>
            <person name="Aigle M."/>
            <person name="Aljinovic G."/>
            <person name="Andre B."/>
            <person name="Baclet M.C."/>
            <person name="Barthe C."/>
            <person name="Baur A."/>
            <person name="Becam A.-M."/>
            <person name="Biteau N."/>
            <person name="Boles E."/>
            <person name="Brandt T."/>
            <person name="Brendel M."/>
            <person name="Brueckner M."/>
            <person name="Bussereau F."/>
            <person name="Christiansen C."/>
            <person name="Contreras R."/>
            <person name="Crouzet M."/>
            <person name="Cziepluch C."/>
            <person name="Demolis N."/>
            <person name="Delaveau T."/>
            <person name="Doignon F."/>
            <person name="Domdey H."/>
            <person name="Duesterhus S."/>
            <person name="Dubois E."/>
            <person name="Dujon B."/>
            <person name="El Bakkoury M."/>
            <person name="Entian K.-D."/>
            <person name="Feuermann M."/>
            <person name="Fiers W."/>
            <person name="Fobo G.M."/>
            <person name="Fritz C."/>
            <person name="Gassenhuber J."/>
            <person name="Glansdorff N."/>
            <person name="Goffeau A."/>
            <person name="Grivell L.A."/>
            <person name="de Haan M."/>
            <person name="Hein C."/>
            <person name="Herbert C.J."/>
            <person name="Hollenberg C.P."/>
            <person name="Holmstroem K."/>
            <person name="Jacq C."/>
            <person name="Jacquet M."/>
            <person name="Jauniaux J.-C."/>
            <person name="Jonniaux J.-L."/>
            <person name="Kallesoee T."/>
            <person name="Kiesau P."/>
            <person name="Kirchrath L."/>
            <person name="Koetter P."/>
            <person name="Korol S."/>
            <person name="Liebl S."/>
            <person name="Logghe M."/>
            <person name="Lohan A.J.E."/>
            <person name="Louis E.J."/>
            <person name="Li Z.Y."/>
            <person name="Maat M.J."/>
            <person name="Mallet L."/>
            <person name="Mannhaupt G."/>
            <person name="Messenguy F."/>
            <person name="Miosga T."/>
            <person name="Molemans F."/>
            <person name="Mueller S."/>
            <person name="Nasr F."/>
            <person name="Obermaier B."/>
            <person name="Perea J."/>
            <person name="Pierard A."/>
            <person name="Piravandi E."/>
            <person name="Pohl F.M."/>
            <person name="Pohl T.M."/>
            <person name="Potier S."/>
            <person name="Proft M."/>
            <person name="Purnelle B."/>
            <person name="Ramezani Rad M."/>
            <person name="Rieger M."/>
            <person name="Rose M."/>
            <person name="Schaaff-Gerstenschlaeger I."/>
            <person name="Scherens B."/>
            <person name="Schwarzlose C."/>
            <person name="Skala J."/>
            <person name="Slonimski P.P."/>
            <person name="Smits P.H.M."/>
            <person name="Souciet J.-L."/>
            <person name="Steensma H.Y."/>
            <person name="Stucka R."/>
            <person name="Urrestarazu L.A."/>
            <person name="van der Aart Q.J.M."/>
            <person name="Van Dyck L."/>
            <person name="Vassarotti A."/>
            <person name="Vetter I."/>
            <person name="Vierendeels F."/>
            <person name="Vissers S."/>
            <person name="Wagner G."/>
            <person name="de Wergifosse P."/>
            <person name="Wolfe K.H."/>
            <person name="Zagulski M."/>
            <person name="Zimmermann F.K."/>
            <person name="Mewes H.-W."/>
            <person name="Kleine K."/>
        </authorList>
    </citation>
    <scope>NUCLEOTIDE SEQUENCE [LARGE SCALE GENOMIC DNA]</scope>
    <source>
        <strain>ATCC 204508 / S288c</strain>
    </source>
</reference>
<reference key="4">
    <citation type="journal article" date="2014" name="G3 (Bethesda)">
        <title>The reference genome sequence of Saccharomyces cerevisiae: Then and now.</title>
        <authorList>
            <person name="Engel S.R."/>
            <person name="Dietrich F.S."/>
            <person name="Fisk D.G."/>
            <person name="Binkley G."/>
            <person name="Balakrishnan R."/>
            <person name="Costanzo M.C."/>
            <person name="Dwight S.S."/>
            <person name="Hitz B.C."/>
            <person name="Karra K."/>
            <person name="Nash R.S."/>
            <person name="Weng S."/>
            <person name="Wong E.D."/>
            <person name="Lloyd P."/>
            <person name="Skrzypek M.S."/>
            <person name="Miyasato S.R."/>
            <person name="Simison M."/>
            <person name="Cherry J.M."/>
        </authorList>
    </citation>
    <scope>GENOME REANNOTATION</scope>
    <source>
        <strain>ATCC 204508 / S288c</strain>
    </source>
</reference>
<reference key="5">
    <citation type="journal article" date="2003" name="Nature">
        <title>Global analysis of protein expression in yeast.</title>
        <authorList>
            <person name="Ghaemmaghami S."/>
            <person name="Huh W.-K."/>
            <person name="Bower K."/>
            <person name="Howson R.W."/>
            <person name="Belle A."/>
            <person name="Dephoure N."/>
            <person name="O'Shea E.K."/>
            <person name="Weissman J.S."/>
        </authorList>
    </citation>
    <scope>LEVEL OF PROTEIN EXPRESSION [LARGE SCALE ANALYSIS]</scope>
</reference>
<reference key="6">
    <citation type="journal article" date="2007" name="Genomics">
        <title>Nine-amino-acid transactivation domain: establishment and prediction utilities.</title>
        <authorList>
            <person name="Piskacek S."/>
            <person name="Gregor M."/>
            <person name="Nemethova M."/>
            <person name="Grabner M."/>
            <person name="Kovarik P."/>
            <person name="Piskacek M."/>
        </authorList>
    </citation>
    <scope>DOMAIN</scope>
</reference>
<reference key="7">
    <citation type="journal article" date="2007" name="J. Proteome Res.">
        <title>Large-scale phosphorylation analysis of alpha-factor-arrested Saccharomyces cerevisiae.</title>
        <authorList>
            <person name="Li X."/>
            <person name="Gerber S.A."/>
            <person name="Rudner A.D."/>
            <person name="Beausoleil S.A."/>
            <person name="Haas W."/>
            <person name="Villen J."/>
            <person name="Elias J.E."/>
            <person name="Gygi S.P."/>
        </authorList>
    </citation>
    <scope>PHOSPHORYLATION [LARGE SCALE ANALYSIS] AT SER-123 AND SER-142</scope>
    <scope>IDENTIFICATION BY MASS SPECTROMETRY [LARGE SCALE ANALYSIS]</scope>
    <source>
        <strain>ADR376</strain>
    </source>
</reference>
<reference key="8">
    <citation type="journal article" date="2008" name="Mol. Cell. Proteomics">
        <title>A multidimensional chromatography technology for in-depth phosphoproteome analysis.</title>
        <authorList>
            <person name="Albuquerque C.P."/>
            <person name="Smolka M.B."/>
            <person name="Payne S.H."/>
            <person name="Bafna V."/>
            <person name="Eng J."/>
            <person name="Zhou H."/>
        </authorList>
    </citation>
    <scope>PHOSPHORYLATION [LARGE SCALE ANALYSIS] AT SER-142; THR-150; SER-227 AND SER-236</scope>
    <scope>IDENTIFICATION BY MASS SPECTROMETRY [LARGE SCALE ANALYSIS]</scope>
</reference>
<reference key="9">
    <citation type="journal article" date="2009" name="Science">
        <title>Global analysis of Cdk1 substrate phosphorylation sites provides insights into evolution.</title>
        <authorList>
            <person name="Holt L.J."/>
            <person name="Tuch B.B."/>
            <person name="Villen J."/>
            <person name="Johnson A.D."/>
            <person name="Gygi S.P."/>
            <person name="Morgan D.O."/>
        </authorList>
    </citation>
    <scope>PHOSPHORYLATION [LARGE SCALE ANALYSIS] AT SER-81; SER-123; SER-142; SER-236; SER-241 AND SER-269</scope>
    <scope>IDENTIFICATION BY MASS SPECTROMETRY [LARGE SCALE ANALYSIS]</scope>
</reference>
<reference key="10">
    <citation type="journal article" date="2012" name="Proc. Natl. Acad. Sci. U.S.A.">
        <title>N-terminal acetylome analyses and functional insights of the N-terminal acetyltransferase NatB.</title>
        <authorList>
            <person name="Van Damme P."/>
            <person name="Lasa M."/>
            <person name="Polevoda B."/>
            <person name="Gazquez C."/>
            <person name="Elosegui-Artola A."/>
            <person name="Kim D.S."/>
            <person name="De Juan-Pardo E."/>
            <person name="Demeyer K."/>
            <person name="Hole K."/>
            <person name="Larrea E."/>
            <person name="Timmerman E."/>
            <person name="Prieto J."/>
            <person name="Arnesen T."/>
            <person name="Sherman F."/>
            <person name="Gevaert K."/>
            <person name="Aldabe R."/>
        </authorList>
    </citation>
    <scope>IDENTIFICATION BY MASS SPECTROMETRY [LARGE SCALE ANALYSIS]</scope>
</reference>
<comment type="function">
    <text>Transcription factor that regulates CIT2 gene expression. Binds to two identical sites oriented as inverted repeats 28 bp apart in a regulatory upstream activation sequence element (UASR) in the CIT2 promoter. The core binding site is 5'-GGTCAC-3'.</text>
</comment>
<comment type="subunit">
    <text>Binds DNA as a heterodimer with RTG1.</text>
</comment>
<comment type="interaction">
    <interactant intactId="EBI-16328">
        <id>P38165</id>
    </interactant>
    <interactant intactId="EBI-16312">
        <id>P32607</id>
        <label>RTG1</label>
    </interactant>
    <organismsDiffer>false</organismsDiffer>
    <experiments>5</experiments>
</comment>
<comment type="subcellular location">
    <subcellularLocation>
        <location evidence="5">Nucleus</location>
    </subcellularLocation>
</comment>
<comment type="domain">
    <text evidence="4">The 9aaTAD motifs are transactivation domains present in a large number of yeast and animal transcription factors.</text>
</comment>
<comment type="miscellaneous">
    <text evidence="3">Present with 1050 molecules/cell in log phase SD medium.</text>
</comment>
<comment type="sequence caution" evidence="5">
    <conflict type="frameshift">
        <sequence resource="EMBL-CDS" id="CAA55992"/>
    </conflict>
</comment>
<keyword id="KW-0238">DNA-binding</keyword>
<keyword id="KW-0539">Nucleus</keyword>
<keyword id="KW-0597">Phosphoprotein</keyword>
<keyword id="KW-1185">Reference proteome</keyword>
<keyword id="KW-0677">Repeat</keyword>
<keyword id="KW-0804">Transcription</keyword>
<keyword id="KW-0805">Transcription regulation</keyword>
<name>RTG3_YEAST</name>
<gene>
    <name type="primary">RTG3</name>
    <name type="ordered locus">YBL103C</name>
    <name type="ORF">YBL0810</name>
</gene>
<protein>
    <recommendedName>
        <fullName>Retrograde regulation protein 3</fullName>
    </recommendedName>
</protein>
<evidence type="ECO:0000255" key="1">
    <source>
        <dbReference type="PROSITE-ProRule" id="PRU00981"/>
    </source>
</evidence>
<evidence type="ECO:0000256" key="2">
    <source>
        <dbReference type="SAM" id="MobiDB-lite"/>
    </source>
</evidence>
<evidence type="ECO:0000269" key="3">
    <source>
    </source>
</evidence>
<evidence type="ECO:0000269" key="4">
    <source>
    </source>
</evidence>
<evidence type="ECO:0000305" key="5"/>
<evidence type="ECO:0007744" key="6">
    <source>
    </source>
</evidence>
<evidence type="ECO:0007744" key="7">
    <source>
    </source>
</evidence>
<evidence type="ECO:0007744" key="8">
    <source>
    </source>
</evidence>
<dbReference type="EMBL" id="U46012">
    <property type="protein sequence ID" value="AAA86842.1"/>
    <property type="molecule type" value="Genomic_DNA"/>
</dbReference>
<dbReference type="EMBL" id="X79489">
    <property type="protein sequence ID" value="CAA55992.1"/>
    <property type="status" value="ALT_FRAME"/>
    <property type="molecule type" value="Genomic_DNA"/>
</dbReference>
<dbReference type="EMBL" id="Z35864">
    <property type="protein sequence ID" value="CAA84929.1"/>
    <property type="molecule type" value="Genomic_DNA"/>
</dbReference>
<dbReference type="EMBL" id="Z35865">
    <property type="protein sequence ID" value="CAA84931.1"/>
    <property type="molecule type" value="Genomic_DNA"/>
</dbReference>
<dbReference type="EMBL" id="BK006936">
    <property type="protein sequence ID" value="DAA07020.1"/>
    <property type="molecule type" value="Genomic_DNA"/>
</dbReference>
<dbReference type="PIR" id="S74319">
    <property type="entry name" value="S74319"/>
</dbReference>
<dbReference type="RefSeq" id="NP_009447.1">
    <property type="nucleotide sequence ID" value="NM_001178343.1"/>
</dbReference>
<dbReference type="SMR" id="P38165"/>
<dbReference type="BioGRID" id="32600">
    <property type="interactions" value="473"/>
</dbReference>
<dbReference type="ComplexPortal" id="CPX-828">
    <property type="entry name" value="RTG transcription factor complex"/>
</dbReference>
<dbReference type="DIP" id="DIP-2501N"/>
<dbReference type="FunCoup" id="P38165">
    <property type="interactions" value="1235"/>
</dbReference>
<dbReference type="IntAct" id="P38165">
    <property type="interactions" value="25"/>
</dbReference>
<dbReference type="MINT" id="P38165"/>
<dbReference type="STRING" id="4932.YBL103C"/>
<dbReference type="GlyGen" id="P38165">
    <property type="glycosylation" value="1 site, 1 O-linked glycan (1 site)"/>
</dbReference>
<dbReference type="iPTMnet" id="P38165"/>
<dbReference type="PaxDb" id="4932-YBL103C"/>
<dbReference type="PeptideAtlas" id="P38165"/>
<dbReference type="EnsemblFungi" id="YBL103C_mRNA">
    <property type="protein sequence ID" value="YBL103C"/>
    <property type="gene ID" value="YBL103C"/>
</dbReference>
<dbReference type="GeneID" id="852171"/>
<dbReference type="KEGG" id="sce:YBL103C"/>
<dbReference type="AGR" id="SGD:S000000199"/>
<dbReference type="SGD" id="S000000199">
    <property type="gene designation" value="RTG3"/>
</dbReference>
<dbReference type="VEuPathDB" id="FungiDB:YBL103C"/>
<dbReference type="eggNOG" id="KOG1318">
    <property type="taxonomic scope" value="Eukaryota"/>
</dbReference>
<dbReference type="HOGENOM" id="CLU_043302_0_0_1"/>
<dbReference type="InParanoid" id="P38165"/>
<dbReference type="OMA" id="DDAMFNY"/>
<dbReference type="OrthoDB" id="690068at2759"/>
<dbReference type="BioCyc" id="YEAST:G3O-28987-MONOMER"/>
<dbReference type="Reactome" id="R-SCE-3232118">
    <property type="pathway name" value="SUMOylation of transcription factors"/>
</dbReference>
<dbReference type="Reactome" id="R-SCE-9856649">
    <property type="pathway name" value="Transcriptional and post-translational regulation of MITF-M expression and activity"/>
</dbReference>
<dbReference type="BioGRID-ORCS" id="852171">
    <property type="hits" value="8 hits in 13 CRISPR screens"/>
</dbReference>
<dbReference type="PRO" id="PR:P38165"/>
<dbReference type="Proteomes" id="UP000002311">
    <property type="component" value="Chromosome II"/>
</dbReference>
<dbReference type="RNAct" id="P38165">
    <property type="molecule type" value="protein"/>
</dbReference>
<dbReference type="GO" id="GO:0005737">
    <property type="term" value="C:cytoplasm"/>
    <property type="evidence" value="ECO:0000314"/>
    <property type="project" value="SGD"/>
</dbReference>
<dbReference type="GO" id="GO:0005634">
    <property type="term" value="C:nucleus"/>
    <property type="evidence" value="ECO:0000314"/>
    <property type="project" value="ComplexPortal"/>
</dbReference>
<dbReference type="GO" id="GO:0005667">
    <property type="term" value="C:transcription regulator complex"/>
    <property type="evidence" value="ECO:0000353"/>
    <property type="project" value="ComplexPortal"/>
</dbReference>
<dbReference type="GO" id="GO:0000981">
    <property type="term" value="F:DNA-binding transcription factor activity, RNA polymerase II-specific"/>
    <property type="evidence" value="ECO:0000314"/>
    <property type="project" value="SGD"/>
</dbReference>
<dbReference type="GO" id="GO:0046983">
    <property type="term" value="F:protein dimerization activity"/>
    <property type="evidence" value="ECO:0007669"/>
    <property type="project" value="InterPro"/>
</dbReference>
<dbReference type="GO" id="GO:0000978">
    <property type="term" value="F:RNA polymerase II cis-regulatory region sequence-specific DNA binding"/>
    <property type="evidence" value="ECO:0000318"/>
    <property type="project" value="GO_Central"/>
</dbReference>
<dbReference type="GO" id="GO:0061629">
    <property type="term" value="F:RNA polymerase II-specific DNA-binding transcription factor binding"/>
    <property type="evidence" value="ECO:0000353"/>
    <property type="project" value="SGD"/>
</dbReference>
<dbReference type="GO" id="GO:0043565">
    <property type="term" value="F:sequence-specific DNA binding"/>
    <property type="evidence" value="ECO:0007005"/>
    <property type="project" value="SGD"/>
</dbReference>
<dbReference type="GO" id="GO:0000422">
    <property type="term" value="P:autophagy of mitochondrion"/>
    <property type="evidence" value="ECO:0000315"/>
    <property type="project" value="SGD"/>
</dbReference>
<dbReference type="GO" id="GO:0071400">
    <property type="term" value="P:cellular response to oleic acid"/>
    <property type="evidence" value="ECO:0000315"/>
    <property type="project" value="SGD"/>
</dbReference>
<dbReference type="GO" id="GO:0031930">
    <property type="term" value="P:mitochondria-nucleus signaling pathway"/>
    <property type="evidence" value="ECO:0000314"/>
    <property type="project" value="ComplexPortal"/>
</dbReference>
<dbReference type="GO" id="GO:0016559">
    <property type="term" value="P:peroxisome fission"/>
    <property type="evidence" value="ECO:0000314"/>
    <property type="project" value="ComplexPortal"/>
</dbReference>
<dbReference type="GO" id="GO:0045944">
    <property type="term" value="P:positive regulation of transcription by RNA polymerase II"/>
    <property type="evidence" value="ECO:0000314"/>
    <property type="project" value="SGD"/>
</dbReference>
<dbReference type="GO" id="GO:0006357">
    <property type="term" value="P:regulation of transcription by RNA polymerase II"/>
    <property type="evidence" value="ECO:0000314"/>
    <property type="project" value="ComplexPortal"/>
</dbReference>
<dbReference type="CDD" id="cd11387">
    <property type="entry name" value="bHLHzip_USF_MITF"/>
    <property type="match status" value="1"/>
</dbReference>
<dbReference type="FunFam" id="4.10.280.10:FF:000105">
    <property type="entry name" value="Rtg3p"/>
    <property type="match status" value="1"/>
</dbReference>
<dbReference type="Gene3D" id="4.10.280.10">
    <property type="entry name" value="Helix-loop-helix DNA-binding domain"/>
    <property type="match status" value="1"/>
</dbReference>
<dbReference type="InterPro" id="IPR011598">
    <property type="entry name" value="bHLH_dom"/>
</dbReference>
<dbReference type="InterPro" id="IPR036638">
    <property type="entry name" value="HLH_DNA-bd_sf"/>
</dbReference>
<dbReference type="PANTHER" id="PTHR45776">
    <property type="entry name" value="MIP04163P"/>
    <property type="match status" value="1"/>
</dbReference>
<dbReference type="PANTHER" id="PTHR45776:SF2">
    <property type="entry name" value="MIP04163P"/>
    <property type="match status" value="1"/>
</dbReference>
<dbReference type="Pfam" id="PF00010">
    <property type="entry name" value="HLH"/>
    <property type="match status" value="1"/>
</dbReference>
<dbReference type="SMART" id="SM00353">
    <property type="entry name" value="HLH"/>
    <property type="match status" value="1"/>
</dbReference>
<dbReference type="SUPFAM" id="SSF47459">
    <property type="entry name" value="HLH, helix-loop-helix DNA-binding domain"/>
    <property type="match status" value="1"/>
</dbReference>
<dbReference type="PROSITE" id="PS50888">
    <property type="entry name" value="BHLH"/>
    <property type="match status" value="1"/>
</dbReference>
<accession>P38165</accession>
<accession>D6VPQ0</accession>
<accession>P89494</accession>